<protein>
    <recommendedName>
        <fullName>Carboxymethylenebutenolidase</fullName>
        <ecNumber>3.1.1.45</ecNumber>
    </recommendedName>
    <alternativeName>
        <fullName>Dienelactone hydrolase</fullName>
        <shortName>DLH</shortName>
    </alternativeName>
</protein>
<name>TCBE_PSESQ</name>
<evidence type="ECO:0000250" key="1"/>
<evidence type="ECO:0000305" key="2"/>
<geneLocation type="plasmid">
    <name>pP51</name>
</geneLocation>
<organism>
    <name type="scientific">Pseudomonas sp. (strain P51)</name>
    <dbReference type="NCBI Taxonomy" id="65067"/>
    <lineage>
        <taxon>Bacteria</taxon>
        <taxon>Pseudomonadati</taxon>
        <taxon>Pseudomonadota</taxon>
        <taxon>Gammaproteobacteria</taxon>
        <taxon>Pseudomonadales</taxon>
        <taxon>Pseudomonadaceae</taxon>
        <taxon>Pseudomonas</taxon>
    </lineage>
</organism>
<comment type="function">
    <text>Ring cleavage of cyclic ester dienelactone to produce maleylacetate.</text>
</comment>
<comment type="catalytic activity">
    <reaction>
        <text>2-(5-oxo-2,5-dihydrofuran-2-ylidene)acetate + H2O = 4-oxohex-2-enedioate + H(+)</text>
        <dbReference type="Rhea" id="RHEA:12372"/>
        <dbReference type="ChEBI" id="CHEBI:12040"/>
        <dbReference type="ChEBI" id="CHEBI:15377"/>
        <dbReference type="ChEBI" id="CHEBI:15378"/>
        <dbReference type="ChEBI" id="CHEBI:57263"/>
        <dbReference type="EC" id="3.1.1.45"/>
    </reaction>
</comment>
<comment type="pathway">
    <text>Aromatic compound metabolism; 3-chlorocatechol degradation.</text>
</comment>
<comment type="subunit">
    <text>Monomer.</text>
</comment>
<comment type="miscellaneous">
    <text>Carboxymethylenebutenolidase is specific for dienelactone and has no activity toward enol-lactones.</text>
</comment>
<comment type="similarity">
    <text evidence="2">Belongs to the dienelactone hydrolase family.</text>
</comment>
<dbReference type="EC" id="3.1.1.45"/>
<dbReference type="EMBL" id="M57629">
    <property type="protein sequence ID" value="AAD13628.1"/>
    <property type="molecule type" value="Genomic_DNA"/>
</dbReference>
<dbReference type="PIR" id="D43673">
    <property type="entry name" value="D43673"/>
</dbReference>
<dbReference type="SMR" id="P27100"/>
<dbReference type="ESTHER" id="alceu-CBNC">
    <property type="family name" value="Dienelactone_hydrolase"/>
</dbReference>
<dbReference type="BioCyc" id="MetaCyc:MONOMER-14406"/>
<dbReference type="UniPathway" id="UPA00083"/>
<dbReference type="GO" id="GO:0008806">
    <property type="term" value="F:carboxymethylenebutenolidase activity"/>
    <property type="evidence" value="ECO:0007669"/>
    <property type="project" value="UniProtKB-EC"/>
</dbReference>
<dbReference type="GO" id="GO:0009056">
    <property type="term" value="P:catabolic process"/>
    <property type="evidence" value="ECO:0007669"/>
    <property type="project" value="UniProtKB-KW"/>
</dbReference>
<dbReference type="Gene3D" id="3.40.50.1820">
    <property type="entry name" value="alpha/beta hydrolase"/>
    <property type="match status" value="1"/>
</dbReference>
<dbReference type="InterPro" id="IPR029058">
    <property type="entry name" value="AB_hydrolase_fold"/>
</dbReference>
<dbReference type="InterPro" id="IPR002925">
    <property type="entry name" value="Dienelactn_hydro"/>
</dbReference>
<dbReference type="InterPro" id="IPR051049">
    <property type="entry name" value="Dienelactone_hydrolase-like"/>
</dbReference>
<dbReference type="PANTHER" id="PTHR46623:SF6">
    <property type="entry name" value="ALPHA_BETA-HYDROLASES SUPERFAMILY PROTEIN"/>
    <property type="match status" value="1"/>
</dbReference>
<dbReference type="PANTHER" id="PTHR46623">
    <property type="entry name" value="CARBOXYMETHYLENEBUTENOLIDASE-RELATED"/>
    <property type="match status" value="1"/>
</dbReference>
<dbReference type="Pfam" id="PF01738">
    <property type="entry name" value="DLH"/>
    <property type="match status" value="1"/>
</dbReference>
<dbReference type="SUPFAM" id="SSF53474">
    <property type="entry name" value="alpha/beta-Hydrolases"/>
    <property type="match status" value="1"/>
</dbReference>
<proteinExistence type="inferred from homology"/>
<accession>P27100</accession>
<sequence>MLTEGLSIDAKGGGRFGAHLQLPARGRGPVVMVAQEIFGVNPFMTEVLAWLASEGFVGLCPDLYWRHGPGIEFDPNDEVQRARALGMFRDYKLEDGVADLRATVAYAASQPFCDGGVAVIGYCLGGALAYEVAAEGFAQCCVGYYGVGFEKRLERARLVKTPSMFHMGTNDHFVTAEARQLITNAFEANPAIALHWYDAGHSFARASSPNFSPEATRTANARTLEMLKRMKPIGTIGQ</sequence>
<gene>
    <name type="primary">tcbE</name>
</gene>
<feature type="chain" id="PRO_0000161573" description="Carboxymethylenebutenolidase">
    <location>
        <begin position="1"/>
        <end position="238"/>
    </location>
</feature>
<feature type="active site" evidence="1">
    <location>
        <position position="123"/>
    </location>
</feature>
<feature type="active site" evidence="1">
    <location>
        <position position="171"/>
    </location>
</feature>
<feature type="active site" evidence="1">
    <location>
        <position position="201"/>
    </location>
</feature>
<reference key="1">
    <citation type="journal article" date="1991" name="J. Bacteriol.">
        <title>Sequence analysis of the Pseudomonas sp. strain P51 tcb gene cluster, which encodes metabolism of chlorinated catechols: evidence for specialization of catechol 1,2-dioxygenases for chlorinated substrates.</title>
        <authorList>
            <person name="van der Meer J.R."/>
            <person name="Eggen R.I."/>
            <person name="Zehnder A.J."/>
            <person name="de Vos W.M."/>
        </authorList>
    </citation>
    <scope>NUCLEOTIDE SEQUENCE [GENOMIC DNA]</scope>
</reference>
<keyword id="KW-0058">Aromatic hydrocarbons catabolism</keyword>
<keyword id="KW-0378">Hydrolase</keyword>
<keyword id="KW-0614">Plasmid</keyword>
<keyword id="KW-0719">Serine esterase</keyword>